<feature type="chain" id="PRO_1000123242" description="N-acetyl-gamma-glutamyl-phosphate reductase">
    <location>
        <begin position="1"/>
        <end position="347"/>
    </location>
</feature>
<feature type="active site" evidence="1">
    <location>
        <position position="150"/>
    </location>
</feature>
<protein>
    <recommendedName>
        <fullName evidence="1">N-acetyl-gamma-glutamyl-phosphate reductase</fullName>
        <shortName evidence="1">AGPR</shortName>
        <ecNumber evidence="1">1.2.1.38</ecNumber>
    </recommendedName>
    <alternativeName>
        <fullName evidence="1">N-acetyl-glutamate semialdehyde dehydrogenase</fullName>
        <shortName evidence="1">NAGSA dehydrogenase</shortName>
    </alternativeName>
</protein>
<name>ARGC_HALOH</name>
<comment type="function">
    <text evidence="1">Catalyzes the NADPH-dependent reduction of N-acetyl-5-glutamyl phosphate to yield N-acetyl-L-glutamate 5-semialdehyde.</text>
</comment>
<comment type="catalytic activity">
    <reaction evidence="1">
        <text>N-acetyl-L-glutamate 5-semialdehyde + phosphate + NADP(+) = N-acetyl-L-glutamyl 5-phosphate + NADPH + H(+)</text>
        <dbReference type="Rhea" id="RHEA:21588"/>
        <dbReference type="ChEBI" id="CHEBI:15378"/>
        <dbReference type="ChEBI" id="CHEBI:29123"/>
        <dbReference type="ChEBI" id="CHEBI:43474"/>
        <dbReference type="ChEBI" id="CHEBI:57783"/>
        <dbReference type="ChEBI" id="CHEBI:57936"/>
        <dbReference type="ChEBI" id="CHEBI:58349"/>
        <dbReference type="EC" id="1.2.1.38"/>
    </reaction>
</comment>
<comment type="pathway">
    <text evidence="1">Amino-acid biosynthesis; L-arginine biosynthesis; N(2)-acetyl-L-ornithine from L-glutamate: step 3/4.</text>
</comment>
<comment type="subcellular location">
    <subcellularLocation>
        <location evidence="1">Cytoplasm</location>
    </subcellularLocation>
</comment>
<comment type="similarity">
    <text evidence="1">Belongs to the NAGSA dehydrogenase family. Type 1 subfamily.</text>
</comment>
<gene>
    <name evidence="1" type="primary">argC</name>
    <name type="ordered locus">Hore_02820</name>
</gene>
<evidence type="ECO:0000255" key="1">
    <source>
        <dbReference type="HAMAP-Rule" id="MF_00150"/>
    </source>
</evidence>
<accession>B8D1G6</accession>
<dbReference type="EC" id="1.2.1.38" evidence="1"/>
<dbReference type="EMBL" id="CP001098">
    <property type="protein sequence ID" value="ACL69043.1"/>
    <property type="molecule type" value="Genomic_DNA"/>
</dbReference>
<dbReference type="RefSeq" id="WP_012635231.1">
    <property type="nucleotide sequence ID" value="NC_011899.1"/>
</dbReference>
<dbReference type="SMR" id="B8D1G6"/>
<dbReference type="STRING" id="373903.Hore_02820"/>
<dbReference type="KEGG" id="hor:Hore_02820"/>
<dbReference type="eggNOG" id="COG0002">
    <property type="taxonomic scope" value="Bacteria"/>
</dbReference>
<dbReference type="HOGENOM" id="CLU_006384_0_1_9"/>
<dbReference type="OrthoDB" id="9801289at2"/>
<dbReference type="UniPathway" id="UPA00068">
    <property type="reaction ID" value="UER00108"/>
</dbReference>
<dbReference type="Proteomes" id="UP000000719">
    <property type="component" value="Chromosome"/>
</dbReference>
<dbReference type="GO" id="GO:0005737">
    <property type="term" value="C:cytoplasm"/>
    <property type="evidence" value="ECO:0007669"/>
    <property type="project" value="UniProtKB-SubCell"/>
</dbReference>
<dbReference type="GO" id="GO:0003942">
    <property type="term" value="F:N-acetyl-gamma-glutamyl-phosphate reductase activity"/>
    <property type="evidence" value="ECO:0007669"/>
    <property type="project" value="UniProtKB-UniRule"/>
</dbReference>
<dbReference type="GO" id="GO:0051287">
    <property type="term" value="F:NAD binding"/>
    <property type="evidence" value="ECO:0007669"/>
    <property type="project" value="InterPro"/>
</dbReference>
<dbReference type="GO" id="GO:0070401">
    <property type="term" value="F:NADP+ binding"/>
    <property type="evidence" value="ECO:0007669"/>
    <property type="project" value="InterPro"/>
</dbReference>
<dbReference type="GO" id="GO:0006526">
    <property type="term" value="P:L-arginine biosynthetic process"/>
    <property type="evidence" value="ECO:0007669"/>
    <property type="project" value="UniProtKB-UniRule"/>
</dbReference>
<dbReference type="CDD" id="cd23934">
    <property type="entry name" value="AGPR_1_C"/>
    <property type="match status" value="1"/>
</dbReference>
<dbReference type="CDD" id="cd17895">
    <property type="entry name" value="AGPR_1_N"/>
    <property type="match status" value="1"/>
</dbReference>
<dbReference type="FunFam" id="3.30.360.10:FF:000014">
    <property type="entry name" value="N-acetyl-gamma-glutamyl-phosphate reductase"/>
    <property type="match status" value="1"/>
</dbReference>
<dbReference type="Gene3D" id="3.30.360.10">
    <property type="entry name" value="Dihydrodipicolinate Reductase, domain 2"/>
    <property type="match status" value="1"/>
</dbReference>
<dbReference type="Gene3D" id="3.40.50.720">
    <property type="entry name" value="NAD(P)-binding Rossmann-like Domain"/>
    <property type="match status" value="1"/>
</dbReference>
<dbReference type="HAMAP" id="MF_00150">
    <property type="entry name" value="ArgC_type1"/>
    <property type="match status" value="1"/>
</dbReference>
<dbReference type="InterPro" id="IPR023013">
    <property type="entry name" value="AGPR_AS"/>
</dbReference>
<dbReference type="InterPro" id="IPR000706">
    <property type="entry name" value="AGPR_type-1"/>
</dbReference>
<dbReference type="InterPro" id="IPR036291">
    <property type="entry name" value="NAD(P)-bd_dom_sf"/>
</dbReference>
<dbReference type="InterPro" id="IPR050085">
    <property type="entry name" value="NAGSA_dehydrogenase"/>
</dbReference>
<dbReference type="InterPro" id="IPR000534">
    <property type="entry name" value="Semialdehyde_DH_NAD-bd"/>
</dbReference>
<dbReference type="NCBIfam" id="TIGR01850">
    <property type="entry name" value="argC"/>
    <property type="match status" value="1"/>
</dbReference>
<dbReference type="PANTHER" id="PTHR32338:SF10">
    <property type="entry name" value="N-ACETYL-GAMMA-GLUTAMYL-PHOSPHATE REDUCTASE, CHLOROPLASTIC-RELATED"/>
    <property type="match status" value="1"/>
</dbReference>
<dbReference type="PANTHER" id="PTHR32338">
    <property type="entry name" value="N-ACETYL-GAMMA-GLUTAMYL-PHOSPHATE REDUCTASE, CHLOROPLASTIC-RELATED-RELATED"/>
    <property type="match status" value="1"/>
</dbReference>
<dbReference type="Pfam" id="PF01118">
    <property type="entry name" value="Semialdhyde_dh"/>
    <property type="match status" value="1"/>
</dbReference>
<dbReference type="Pfam" id="PF22698">
    <property type="entry name" value="Semialdhyde_dhC_1"/>
    <property type="match status" value="1"/>
</dbReference>
<dbReference type="SMART" id="SM00859">
    <property type="entry name" value="Semialdhyde_dh"/>
    <property type="match status" value="1"/>
</dbReference>
<dbReference type="SUPFAM" id="SSF55347">
    <property type="entry name" value="Glyceraldehyde-3-phosphate dehydrogenase-like, C-terminal domain"/>
    <property type="match status" value="1"/>
</dbReference>
<dbReference type="SUPFAM" id="SSF51735">
    <property type="entry name" value="NAD(P)-binding Rossmann-fold domains"/>
    <property type="match status" value="1"/>
</dbReference>
<dbReference type="PROSITE" id="PS01224">
    <property type="entry name" value="ARGC"/>
    <property type="match status" value="1"/>
</dbReference>
<organism>
    <name type="scientific">Halothermothrix orenii (strain H 168 / OCM 544 / DSM 9562)</name>
    <dbReference type="NCBI Taxonomy" id="373903"/>
    <lineage>
        <taxon>Bacteria</taxon>
        <taxon>Bacillati</taxon>
        <taxon>Bacillota</taxon>
        <taxon>Clostridia</taxon>
        <taxon>Halanaerobiales</taxon>
        <taxon>Halothermotrichaceae</taxon>
        <taxon>Halothermothrix</taxon>
    </lineage>
</organism>
<sequence length="347" mass="38916">MIRVSIIGATGYTGIELVRLLANHPEVELSSLVSRNASNKPLSDIYPQFIGRIDLKFSEYDCQAICQNSDIVFTALPHGISQEIVGELYNCGVKIIDLSGDFRYKDSAIYEKWYRENHHYPHLLEKAVYGLVEINRNSIKRSSLVANPGCYPTASLLGLWPVISENLINLNTIIIDAKSGVSGAGKGLKRGSHFVEVDENIKGYSIGSHRHTSEIEEIIKTFSGNQKAIVSFTPHLVPMKRGILATIYVKLKQSISERALRELYHKYYPDHGFIKVLPRDIFPETKYVVGTNYCYIGLKYDTRTERLVIISAIDNLVKGAAGQAIQNMNVMFNLPEYMGLKQVGVFP</sequence>
<proteinExistence type="inferred from homology"/>
<reference key="1">
    <citation type="journal article" date="2009" name="PLoS ONE">
        <title>Genome analysis of the anaerobic thermohalophilic bacterium Halothermothrix orenii.</title>
        <authorList>
            <person name="Mavromatis K."/>
            <person name="Ivanova N."/>
            <person name="Anderson I."/>
            <person name="Lykidis A."/>
            <person name="Hooper S.D."/>
            <person name="Sun H."/>
            <person name="Kunin V."/>
            <person name="Lapidus A."/>
            <person name="Hugenholtz P."/>
            <person name="Patel B."/>
            <person name="Kyrpides N.C."/>
        </authorList>
    </citation>
    <scope>NUCLEOTIDE SEQUENCE [LARGE SCALE GENOMIC DNA]</scope>
    <source>
        <strain>H 168 / OCM 544 / DSM 9562</strain>
    </source>
</reference>
<keyword id="KW-0028">Amino-acid biosynthesis</keyword>
<keyword id="KW-0055">Arginine biosynthesis</keyword>
<keyword id="KW-0963">Cytoplasm</keyword>
<keyword id="KW-0521">NADP</keyword>
<keyword id="KW-0560">Oxidoreductase</keyword>
<keyword id="KW-1185">Reference proteome</keyword>